<comment type="similarity">
    <text evidence="2">To P.aeruginosa PA4490 and T.maritima TM0986.</text>
</comment>
<evidence type="ECO:0000255" key="1"/>
<evidence type="ECO:0000305" key="2"/>
<keyword id="KW-1185">Reference proteome</keyword>
<keyword id="KW-0732">Signal</keyword>
<name>YFAT_ECOLI</name>
<dbReference type="EMBL" id="U00096">
    <property type="protein sequence ID" value="AAC75289.2"/>
    <property type="molecule type" value="Genomic_DNA"/>
</dbReference>
<dbReference type="EMBL" id="AP009048">
    <property type="protein sequence ID" value="BAE76671.1"/>
    <property type="molecule type" value="Genomic_DNA"/>
</dbReference>
<dbReference type="RefSeq" id="NP_416732.4">
    <property type="nucleotide sequence ID" value="NC_000913.3"/>
</dbReference>
<dbReference type="RefSeq" id="WP_001295211.1">
    <property type="nucleotide sequence ID" value="NZ_STEB01000002.1"/>
</dbReference>
<dbReference type="SMR" id="P76466"/>
<dbReference type="BioGRID" id="4262134">
    <property type="interactions" value="14"/>
</dbReference>
<dbReference type="FunCoup" id="P76466">
    <property type="interactions" value="88"/>
</dbReference>
<dbReference type="STRING" id="511145.b2229"/>
<dbReference type="PaxDb" id="511145-b2229"/>
<dbReference type="EnsemblBacteria" id="AAC75289">
    <property type="protein sequence ID" value="AAC75289"/>
    <property type="gene ID" value="b2229"/>
</dbReference>
<dbReference type="GeneID" id="946622"/>
<dbReference type="KEGG" id="ecj:JW2223"/>
<dbReference type="KEGG" id="eco:b2229"/>
<dbReference type="KEGG" id="ecoc:C3026_12455"/>
<dbReference type="PATRIC" id="fig|1411691.4.peg.6"/>
<dbReference type="EchoBASE" id="EB3835"/>
<dbReference type="eggNOG" id="COG3234">
    <property type="taxonomic scope" value="Bacteria"/>
</dbReference>
<dbReference type="HOGENOM" id="CLU_086914_0_0_6"/>
<dbReference type="InParanoid" id="P76466"/>
<dbReference type="OMA" id="QGPTPRW"/>
<dbReference type="OrthoDB" id="320761at2"/>
<dbReference type="PhylomeDB" id="P76466"/>
<dbReference type="BioCyc" id="EcoCyc:G7156-MONOMER"/>
<dbReference type="PRO" id="PR:P76466"/>
<dbReference type="Proteomes" id="UP000000625">
    <property type="component" value="Chromosome"/>
</dbReference>
<dbReference type="Gene3D" id="3.90.1720.10">
    <property type="entry name" value="endopeptidase domain like (from Nostoc punctiforme)"/>
    <property type="match status" value="1"/>
</dbReference>
<dbReference type="InterPro" id="IPR009558">
    <property type="entry name" value="DUF1175"/>
</dbReference>
<dbReference type="Pfam" id="PF06672">
    <property type="entry name" value="DUF1175"/>
    <property type="match status" value="1"/>
</dbReference>
<feature type="signal peptide" evidence="1">
    <location>
        <begin position="1"/>
        <end position="19"/>
    </location>
</feature>
<feature type="chain" id="PRO_0000013877" description="Uncharacterized protein YfaT">
    <location>
        <begin position="20"/>
        <end position="207"/>
    </location>
</feature>
<gene>
    <name type="primary">yfaT</name>
    <name type="ordered locus">b2229</name>
    <name type="ordered locus">JW2223</name>
</gene>
<accession>P76466</accession>
<accession>Q2MAN5</accession>
<reference key="1">
    <citation type="journal article" date="1997" name="Science">
        <title>The complete genome sequence of Escherichia coli K-12.</title>
        <authorList>
            <person name="Blattner F.R."/>
            <person name="Plunkett G. III"/>
            <person name="Bloch C.A."/>
            <person name="Perna N.T."/>
            <person name="Burland V."/>
            <person name="Riley M."/>
            <person name="Collado-Vides J."/>
            <person name="Glasner J.D."/>
            <person name="Rode C.K."/>
            <person name="Mayhew G.F."/>
            <person name="Gregor J."/>
            <person name="Davis N.W."/>
            <person name="Kirkpatrick H.A."/>
            <person name="Goeden M.A."/>
            <person name="Rose D.J."/>
            <person name="Mau B."/>
            <person name="Shao Y."/>
        </authorList>
    </citation>
    <scope>NUCLEOTIDE SEQUENCE [LARGE SCALE GENOMIC DNA]</scope>
    <source>
        <strain>K12 / MG1655 / ATCC 47076</strain>
    </source>
</reference>
<reference key="2">
    <citation type="journal article" date="2006" name="Mol. Syst. Biol.">
        <title>Highly accurate genome sequences of Escherichia coli K-12 strains MG1655 and W3110.</title>
        <authorList>
            <person name="Hayashi K."/>
            <person name="Morooka N."/>
            <person name="Yamamoto Y."/>
            <person name="Fujita K."/>
            <person name="Isono K."/>
            <person name="Choi S."/>
            <person name="Ohtsubo E."/>
            <person name="Baba T."/>
            <person name="Wanner B.L."/>
            <person name="Mori H."/>
            <person name="Horiuchi T."/>
        </authorList>
    </citation>
    <scope>NUCLEOTIDE SEQUENCE [LARGE SCALE GENOMIC DNA]</scope>
    <source>
        <strain>K12 / W3110 / ATCC 27325 / DSM 5911</strain>
    </source>
</reference>
<protein>
    <recommendedName>
        <fullName>Uncharacterized protein YfaT</fullName>
    </recommendedName>
</protein>
<sequence>MRHGLLALICWLCCVVAHSEMLNVEQSGLFRAWFVRIAQEQLRQGPSPRWYQQDCAGLVRFAANETLKVHDSKWLKSNGLSSQYLPPEMTLTPEQRQLAQNWNQGNGKTGPYVTAINLIQYNSQFIGQDINQALPGDMIFFDQGDAQHLMVWMGRYVIYHTGSATKTDNGMRAVSLQQLMTWKDTRWIPNDSNPNFIGIYRLNFLAR</sequence>
<organism>
    <name type="scientific">Escherichia coli (strain K12)</name>
    <dbReference type="NCBI Taxonomy" id="83333"/>
    <lineage>
        <taxon>Bacteria</taxon>
        <taxon>Pseudomonadati</taxon>
        <taxon>Pseudomonadota</taxon>
        <taxon>Gammaproteobacteria</taxon>
        <taxon>Enterobacterales</taxon>
        <taxon>Enterobacteriaceae</taxon>
        <taxon>Escherichia</taxon>
    </lineage>
</organism>
<proteinExistence type="inferred from homology"/>